<dbReference type="EC" id="3.5.4.5" evidence="1"/>
<dbReference type="EMBL" id="CP000851">
    <property type="protein sequence ID" value="ABV87808.1"/>
    <property type="molecule type" value="Genomic_DNA"/>
</dbReference>
<dbReference type="RefSeq" id="WP_012155717.1">
    <property type="nucleotide sequence ID" value="NC_009901.1"/>
</dbReference>
<dbReference type="SMR" id="A8H5H1"/>
<dbReference type="STRING" id="398579.Spea_2488"/>
<dbReference type="KEGG" id="spl:Spea_2488"/>
<dbReference type="eggNOG" id="COG0295">
    <property type="taxonomic scope" value="Bacteria"/>
</dbReference>
<dbReference type="HOGENOM" id="CLU_052424_0_0_6"/>
<dbReference type="OrthoDB" id="9795347at2"/>
<dbReference type="Proteomes" id="UP000002608">
    <property type="component" value="Chromosome"/>
</dbReference>
<dbReference type="GO" id="GO:0005829">
    <property type="term" value="C:cytosol"/>
    <property type="evidence" value="ECO:0007669"/>
    <property type="project" value="TreeGrafter"/>
</dbReference>
<dbReference type="GO" id="GO:0004126">
    <property type="term" value="F:cytidine deaminase activity"/>
    <property type="evidence" value="ECO:0007669"/>
    <property type="project" value="UniProtKB-UniRule"/>
</dbReference>
<dbReference type="GO" id="GO:0042802">
    <property type="term" value="F:identical protein binding"/>
    <property type="evidence" value="ECO:0007669"/>
    <property type="project" value="UniProtKB-ARBA"/>
</dbReference>
<dbReference type="GO" id="GO:0008270">
    <property type="term" value="F:zinc ion binding"/>
    <property type="evidence" value="ECO:0007669"/>
    <property type="project" value="UniProtKB-UniRule"/>
</dbReference>
<dbReference type="GO" id="GO:0009972">
    <property type="term" value="P:cytidine deamination"/>
    <property type="evidence" value="ECO:0007669"/>
    <property type="project" value="InterPro"/>
</dbReference>
<dbReference type="CDD" id="cd01283">
    <property type="entry name" value="cytidine_deaminase"/>
    <property type="match status" value="1"/>
</dbReference>
<dbReference type="FunFam" id="3.40.140.10:FF:000007">
    <property type="entry name" value="Cytidine deaminase"/>
    <property type="match status" value="1"/>
</dbReference>
<dbReference type="Gene3D" id="3.40.140.10">
    <property type="entry name" value="Cytidine Deaminase, domain 2"/>
    <property type="match status" value="2"/>
</dbReference>
<dbReference type="HAMAP" id="MF_01558">
    <property type="entry name" value="Cyt_deam"/>
    <property type="match status" value="1"/>
</dbReference>
<dbReference type="InterPro" id="IPR016192">
    <property type="entry name" value="APOBEC/CMP_deaminase_Zn-bd"/>
</dbReference>
<dbReference type="InterPro" id="IPR002125">
    <property type="entry name" value="CMP_dCMP_dom"/>
</dbReference>
<dbReference type="InterPro" id="IPR013171">
    <property type="entry name" value="Cyd/dCyd_deaminase_Zn-bd"/>
</dbReference>
<dbReference type="InterPro" id="IPR050202">
    <property type="entry name" value="Cyt/Deoxycyt_deaminase"/>
</dbReference>
<dbReference type="InterPro" id="IPR016193">
    <property type="entry name" value="Cytidine_deaminase-like"/>
</dbReference>
<dbReference type="InterPro" id="IPR020797">
    <property type="entry name" value="Cytidine_deaminase_bacteria"/>
</dbReference>
<dbReference type="NCBIfam" id="NF006537">
    <property type="entry name" value="PRK09027.1"/>
    <property type="match status" value="1"/>
</dbReference>
<dbReference type="PANTHER" id="PTHR11644">
    <property type="entry name" value="CYTIDINE DEAMINASE"/>
    <property type="match status" value="1"/>
</dbReference>
<dbReference type="PANTHER" id="PTHR11644:SF2">
    <property type="entry name" value="CYTIDINE DEAMINASE"/>
    <property type="match status" value="1"/>
</dbReference>
<dbReference type="Pfam" id="PF00383">
    <property type="entry name" value="dCMP_cyt_deam_1"/>
    <property type="match status" value="1"/>
</dbReference>
<dbReference type="Pfam" id="PF08211">
    <property type="entry name" value="dCMP_cyt_deam_2"/>
    <property type="match status" value="1"/>
</dbReference>
<dbReference type="PIRSF" id="PIRSF006334">
    <property type="entry name" value="Cdd_plus_pseudo"/>
    <property type="match status" value="1"/>
</dbReference>
<dbReference type="SUPFAM" id="SSF53927">
    <property type="entry name" value="Cytidine deaminase-like"/>
    <property type="match status" value="2"/>
</dbReference>
<dbReference type="PROSITE" id="PS00903">
    <property type="entry name" value="CYT_DCMP_DEAMINASES_1"/>
    <property type="match status" value="1"/>
</dbReference>
<dbReference type="PROSITE" id="PS51747">
    <property type="entry name" value="CYT_DCMP_DEAMINASES_2"/>
    <property type="match status" value="2"/>
</dbReference>
<proteinExistence type="inferred from homology"/>
<protein>
    <recommendedName>
        <fullName evidence="1">Cytidine deaminase</fullName>
        <ecNumber evidence="1">3.5.4.5</ecNumber>
    </recommendedName>
    <alternativeName>
        <fullName evidence="1">Cytidine aminohydrolase</fullName>
        <shortName evidence="1">CDA</shortName>
    </alternativeName>
</protein>
<evidence type="ECO:0000255" key="1">
    <source>
        <dbReference type="HAMAP-Rule" id="MF_01558"/>
    </source>
</evidence>
<evidence type="ECO:0000255" key="2">
    <source>
        <dbReference type="PROSITE-ProRule" id="PRU01083"/>
    </source>
</evidence>
<name>CDD_SHEPA</name>
<keyword id="KW-0378">Hydrolase</keyword>
<keyword id="KW-0479">Metal-binding</keyword>
<keyword id="KW-1185">Reference proteome</keyword>
<keyword id="KW-0862">Zinc</keyword>
<organism>
    <name type="scientific">Shewanella pealeana (strain ATCC 700345 / ANG-SQ1)</name>
    <dbReference type="NCBI Taxonomy" id="398579"/>
    <lineage>
        <taxon>Bacteria</taxon>
        <taxon>Pseudomonadati</taxon>
        <taxon>Pseudomonadota</taxon>
        <taxon>Gammaproteobacteria</taxon>
        <taxon>Alteromonadales</taxon>
        <taxon>Shewanellaceae</taxon>
        <taxon>Shewanella</taxon>
    </lineage>
</organism>
<accession>A8H5H1</accession>
<feature type="chain" id="PRO_1000087799" description="Cytidine deaminase">
    <location>
        <begin position="1"/>
        <end position="296"/>
    </location>
</feature>
<feature type="domain" description="CMP/dCMP-type deaminase 1" evidence="2">
    <location>
        <begin position="47"/>
        <end position="167"/>
    </location>
</feature>
<feature type="domain" description="CMP/dCMP-type deaminase 2" evidence="2">
    <location>
        <begin position="186"/>
        <end position="296"/>
    </location>
</feature>
<feature type="active site" description="Proton donor" evidence="1">
    <location>
        <position position="103"/>
    </location>
</feature>
<feature type="binding site" evidence="1">
    <location>
        <begin position="88"/>
        <end position="90"/>
    </location>
    <ligand>
        <name>substrate</name>
    </ligand>
</feature>
<feature type="binding site" evidence="1">
    <location>
        <position position="101"/>
    </location>
    <ligand>
        <name>Zn(2+)</name>
        <dbReference type="ChEBI" id="CHEBI:29105"/>
        <note>catalytic</note>
    </ligand>
</feature>
<feature type="binding site" evidence="1">
    <location>
        <position position="128"/>
    </location>
    <ligand>
        <name>Zn(2+)</name>
        <dbReference type="ChEBI" id="CHEBI:29105"/>
        <note>catalytic</note>
    </ligand>
</feature>
<feature type="binding site" evidence="1">
    <location>
        <position position="131"/>
    </location>
    <ligand>
        <name>Zn(2+)</name>
        <dbReference type="ChEBI" id="CHEBI:29105"/>
        <note>catalytic</note>
    </ligand>
</feature>
<comment type="function">
    <text evidence="1">This enzyme scavenges exogenous and endogenous cytidine and 2'-deoxycytidine for UMP synthesis.</text>
</comment>
<comment type="catalytic activity">
    <reaction evidence="1">
        <text>cytidine + H2O + H(+) = uridine + NH4(+)</text>
        <dbReference type="Rhea" id="RHEA:16069"/>
        <dbReference type="ChEBI" id="CHEBI:15377"/>
        <dbReference type="ChEBI" id="CHEBI:15378"/>
        <dbReference type="ChEBI" id="CHEBI:16704"/>
        <dbReference type="ChEBI" id="CHEBI:17562"/>
        <dbReference type="ChEBI" id="CHEBI:28938"/>
        <dbReference type="EC" id="3.5.4.5"/>
    </reaction>
</comment>
<comment type="catalytic activity">
    <reaction evidence="1">
        <text>2'-deoxycytidine + H2O + H(+) = 2'-deoxyuridine + NH4(+)</text>
        <dbReference type="Rhea" id="RHEA:13433"/>
        <dbReference type="ChEBI" id="CHEBI:15377"/>
        <dbReference type="ChEBI" id="CHEBI:15378"/>
        <dbReference type="ChEBI" id="CHEBI:15698"/>
        <dbReference type="ChEBI" id="CHEBI:16450"/>
        <dbReference type="ChEBI" id="CHEBI:28938"/>
        <dbReference type="EC" id="3.5.4.5"/>
    </reaction>
</comment>
<comment type="cofactor">
    <cofactor evidence="1">
        <name>Zn(2+)</name>
        <dbReference type="ChEBI" id="CHEBI:29105"/>
    </cofactor>
    <text evidence="1">Binds 1 zinc ion.</text>
</comment>
<comment type="subunit">
    <text evidence="1">Homodimer.</text>
</comment>
<comment type="similarity">
    <text evidence="1">Belongs to the cytidine and deoxycytidylate deaminase family.</text>
</comment>
<sequence>MQDRFLKSIAKLPEPLATAIVPLLDKDFAGHIDAQQLAELQAASKMELNELLLALLPIAAALARPPISQFHVGAIAKGKSGDIYMGANIELPGEALFHSVHAEQSAISHAWLSGESIIEDIIVNASPCGHCRQFINELVDGGKVNIHLPDQATAPLSHYLPYAFGPSDLDVTEPLLSKQQQTLTLDSNDPMIIEGLDHAGLSYAPYTKAYASVVLETKDGATYCGRYAENAAFNPSMQPMQMALSTMARHNRDFSEINRAVLIESSKGVISLVGAAMDALHSVAAVELEHIVVEPE</sequence>
<reference key="1">
    <citation type="submission" date="2007-10" db="EMBL/GenBank/DDBJ databases">
        <title>Complete sequence of Shewanella pealeana ATCC 700345.</title>
        <authorList>
            <consortium name="US DOE Joint Genome Institute"/>
            <person name="Copeland A."/>
            <person name="Lucas S."/>
            <person name="Lapidus A."/>
            <person name="Barry K."/>
            <person name="Glavina del Rio T."/>
            <person name="Dalin E."/>
            <person name="Tice H."/>
            <person name="Pitluck S."/>
            <person name="Chertkov O."/>
            <person name="Brettin T."/>
            <person name="Bruce D."/>
            <person name="Detter J.C."/>
            <person name="Han C."/>
            <person name="Schmutz J."/>
            <person name="Larimer F."/>
            <person name="Land M."/>
            <person name="Hauser L."/>
            <person name="Kyrpides N."/>
            <person name="Kim E."/>
            <person name="Zhao J.-S.Z."/>
            <person name="Manno D."/>
            <person name="Hawari J."/>
            <person name="Richardson P."/>
        </authorList>
    </citation>
    <scope>NUCLEOTIDE SEQUENCE [LARGE SCALE GENOMIC DNA]</scope>
    <source>
        <strain>ATCC 700345 / ANG-SQ1</strain>
    </source>
</reference>
<gene>
    <name evidence="1" type="primary">cdd</name>
    <name type="ordered locus">Spea_2488</name>
</gene>